<organism>
    <name type="scientific">Candida albicans (strain SC5314 / ATCC MYA-2876)</name>
    <name type="common">Yeast</name>
    <dbReference type="NCBI Taxonomy" id="237561"/>
    <lineage>
        <taxon>Eukaryota</taxon>
        <taxon>Fungi</taxon>
        <taxon>Dikarya</taxon>
        <taxon>Ascomycota</taxon>
        <taxon>Saccharomycotina</taxon>
        <taxon>Pichiomycetes</taxon>
        <taxon>Debaryomycetaceae</taxon>
        <taxon>Candida/Lodderomyces clade</taxon>
        <taxon>Candida</taxon>
    </lineage>
</organism>
<feature type="chain" id="PRO_0000295455" description="Protein transport protein SEC23">
    <location>
        <begin position="1"/>
        <end position="762"/>
    </location>
</feature>
<feature type="binding site" evidence="1">
    <location>
        <position position="56"/>
    </location>
    <ligand>
        <name>Zn(2+)</name>
        <dbReference type="ChEBI" id="CHEBI:29105"/>
    </ligand>
</feature>
<feature type="binding site" evidence="1">
    <location>
        <position position="61"/>
    </location>
    <ligand>
        <name>Zn(2+)</name>
        <dbReference type="ChEBI" id="CHEBI:29105"/>
    </ligand>
</feature>
<feature type="binding site" evidence="1">
    <location>
        <position position="79"/>
    </location>
    <ligand>
        <name>Zn(2+)</name>
        <dbReference type="ChEBI" id="CHEBI:29105"/>
    </ligand>
</feature>
<feature type="binding site" evidence="1">
    <location>
        <position position="82"/>
    </location>
    <ligand>
        <name>Zn(2+)</name>
        <dbReference type="ChEBI" id="CHEBI:29105"/>
    </ligand>
</feature>
<gene>
    <name type="primary">SEC23</name>
    <name type="synonym">SEC231</name>
    <name type="ordered locus">CAALFM_C405690WA</name>
    <name type="ORF">CaO19.1254</name>
    <name type="ORF">CaO19.8839</name>
</gene>
<evidence type="ECO:0000250" key="1"/>
<evidence type="ECO:0000305" key="2"/>
<accession>Q5A455</accession>
<accession>A0A1D8PMD6</accession>
<comment type="function">
    <text evidence="1">Component of the coat protein complex II (COPII) which promotes the formation of transport vesicles from the endoplasmic reticulum (ER). The coat has two main functions, the physical deformation of the endoplasmic reticulum membrane into vesicles and the selection of cargo molecules (By similarity).</text>
</comment>
<comment type="subunit">
    <text evidence="1">The COPII coat is composed of at least 5 proteins: the SEC23/24 complex, the SEC13/31 complex, and the protein SAR1.</text>
</comment>
<comment type="subcellular location">
    <subcellularLocation>
        <location evidence="1">Cytoplasm</location>
    </subcellularLocation>
    <subcellularLocation>
        <location evidence="1">Cytoplasmic vesicle</location>
        <location evidence="1">COPII-coated vesicle membrane</location>
        <topology evidence="1">Peripheral membrane protein</topology>
        <orientation evidence="1">Cytoplasmic side</orientation>
    </subcellularLocation>
    <subcellularLocation>
        <location evidence="1">Endoplasmic reticulum membrane</location>
        <topology evidence="1">Peripheral membrane protein</topology>
        <orientation evidence="1">Cytoplasmic side</orientation>
    </subcellularLocation>
    <subcellularLocation>
        <location evidence="1">Golgi apparatus membrane</location>
        <topology evidence="1">Peripheral membrane protein</topology>
        <orientation evidence="1">Cytoplasmic side</orientation>
    </subcellularLocation>
</comment>
<comment type="similarity">
    <text evidence="2">Belongs to the SEC23/SEC24 family. SEC23 subfamily.</text>
</comment>
<dbReference type="EMBL" id="CP017626">
    <property type="protein sequence ID" value="AOW29301.1"/>
    <property type="molecule type" value="Genomic_DNA"/>
</dbReference>
<dbReference type="RefSeq" id="XP_716562.2">
    <property type="nucleotide sequence ID" value="XM_711469.2"/>
</dbReference>
<dbReference type="SMR" id="Q5A455"/>
<dbReference type="FunCoup" id="Q5A455">
    <property type="interactions" value="1081"/>
</dbReference>
<dbReference type="STRING" id="237561.Q5A455"/>
<dbReference type="EnsemblFungi" id="C4_05690W_A-T">
    <property type="protein sequence ID" value="C4_05690W_A-T-p1"/>
    <property type="gene ID" value="C4_05690W_A"/>
</dbReference>
<dbReference type="GeneID" id="3641818"/>
<dbReference type="KEGG" id="cal:CAALFM_C405690WA"/>
<dbReference type="CGD" id="CAL0000192101">
    <property type="gene designation" value="SEC23"/>
</dbReference>
<dbReference type="VEuPathDB" id="FungiDB:C4_05690W_A"/>
<dbReference type="eggNOG" id="KOG1986">
    <property type="taxonomic scope" value="Eukaryota"/>
</dbReference>
<dbReference type="HOGENOM" id="CLU_008658_3_0_1"/>
<dbReference type="InParanoid" id="Q5A455"/>
<dbReference type="OrthoDB" id="10256289at2759"/>
<dbReference type="PRO" id="PR:Q5A455"/>
<dbReference type="Proteomes" id="UP000000559">
    <property type="component" value="Chromosome 4"/>
</dbReference>
<dbReference type="GO" id="GO:0030127">
    <property type="term" value="C:COPII vesicle coat"/>
    <property type="evidence" value="ECO:0000318"/>
    <property type="project" value="GO_Central"/>
</dbReference>
<dbReference type="GO" id="GO:0070971">
    <property type="term" value="C:endoplasmic reticulum exit site"/>
    <property type="evidence" value="ECO:0000318"/>
    <property type="project" value="GO_Central"/>
</dbReference>
<dbReference type="GO" id="GO:0005789">
    <property type="term" value="C:endoplasmic reticulum membrane"/>
    <property type="evidence" value="ECO:0007669"/>
    <property type="project" value="UniProtKB-SubCell"/>
</dbReference>
<dbReference type="GO" id="GO:0000139">
    <property type="term" value="C:Golgi membrane"/>
    <property type="evidence" value="ECO:0007669"/>
    <property type="project" value="UniProtKB-SubCell"/>
</dbReference>
<dbReference type="GO" id="GO:0005096">
    <property type="term" value="F:GTPase activator activity"/>
    <property type="evidence" value="ECO:0000318"/>
    <property type="project" value="GO_Central"/>
</dbReference>
<dbReference type="GO" id="GO:0008270">
    <property type="term" value="F:zinc ion binding"/>
    <property type="evidence" value="ECO:0007669"/>
    <property type="project" value="InterPro"/>
</dbReference>
<dbReference type="GO" id="GO:0090110">
    <property type="term" value="P:COPII-coated vesicle cargo loading"/>
    <property type="evidence" value="ECO:0000318"/>
    <property type="project" value="GO_Central"/>
</dbReference>
<dbReference type="GO" id="GO:0006886">
    <property type="term" value="P:intracellular protein transport"/>
    <property type="evidence" value="ECO:0007669"/>
    <property type="project" value="EnsemblFungi"/>
</dbReference>
<dbReference type="GO" id="GO:1902953">
    <property type="term" value="P:positive regulation of ER to Golgi vesicle-mediated transport"/>
    <property type="evidence" value="ECO:0007669"/>
    <property type="project" value="EnsemblFungi"/>
</dbReference>
<dbReference type="GO" id="GO:0070863">
    <property type="term" value="P:positive regulation of protein exit from endoplasmic reticulum"/>
    <property type="evidence" value="ECO:0007669"/>
    <property type="project" value="EnsemblFungi"/>
</dbReference>
<dbReference type="GO" id="GO:0003400">
    <property type="term" value="P:regulation of COPII vesicle coating"/>
    <property type="evidence" value="ECO:0007669"/>
    <property type="project" value="EnsemblFungi"/>
</dbReference>
<dbReference type="GO" id="GO:0061709">
    <property type="term" value="P:reticulophagy"/>
    <property type="evidence" value="ECO:0007669"/>
    <property type="project" value="EnsemblFungi"/>
</dbReference>
<dbReference type="CDD" id="cd11287">
    <property type="entry name" value="Sec23_C"/>
    <property type="match status" value="1"/>
</dbReference>
<dbReference type="FunFam" id="1.20.120.730:FF:000001">
    <property type="entry name" value="Protein transport protein SEC23"/>
    <property type="match status" value="1"/>
</dbReference>
<dbReference type="FunFam" id="2.30.30.380:FF:000001">
    <property type="entry name" value="Protein transport protein SEC23"/>
    <property type="match status" value="1"/>
</dbReference>
<dbReference type="FunFam" id="3.40.20.10:FF:000041">
    <property type="entry name" value="Protein transport protein SEC23"/>
    <property type="match status" value="1"/>
</dbReference>
<dbReference type="FunFam" id="3.40.50.410:FF:000008">
    <property type="entry name" value="Protein transport protein SEC23"/>
    <property type="match status" value="1"/>
</dbReference>
<dbReference type="Gene3D" id="2.60.40.1670">
    <property type="entry name" value="beta-sandwich domain of Sec23/24"/>
    <property type="match status" value="1"/>
</dbReference>
<dbReference type="Gene3D" id="1.20.120.730">
    <property type="entry name" value="Sec23/Sec24 helical domain"/>
    <property type="match status" value="1"/>
</dbReference>
<dbReference type="Gene3D" id="3.40.20.10">
    <property type="entry name" value="Severin"/>
    <property type="match status" value="1"/>
</dbReference>
<dbReference type="Gene3D" id="3.40.50.410">
    <property type="entry name" value="von Willebrand factor, type A domain"/>
    <property type="match status" value="1"/>
</dbReference>
<dbReference type="Gene3D" id="2.30.30.380">
    <property type="entry name" value="Zn-finger domain of Sec23/24"/>
    <property type="match status" value="1"/>
</dbReference>
<dbReference type="InterPro" id="IPR029006">
    <property type="entry name" value="ADF-H/Gelsolin-like_dom_sf"/>
</dbReference>
<dbReference type="InterPro" id="IPR007123">
    <property type="entry name" value="Gelsolin-like_dom"/>
</dbReference>
<dbReference type="InterPro" id="IPR036180">
    <property type="entry name" value="Gelsolin-like_dom_sf"/>
</dbReference>
<dbReference type="InterPro" id="IPR037364">
    <property type="entry name" value="Sec23"/>
</dbReference>
<dbReference type="InterPro" id="IPR006900">
    <property type="entry name" value="Sec23/24_helical_dom"/>
</dbReference>
<dbReference type="InterPro" id="IPR036175">
    <property type="entry name" value="Sec23/24_helical_dom_sf"/>
</dbReference>
<dbReference type="InterPro" id="IPR006896">
    <property type="entry name" value="Sec23/24_trunk_dom"/>
</dbReference>
<dbReference type="InterPro" id="IPR012990">
    <property type="entry name" value="Sec23_24_beta_S"/>
</dbReference>
<dbReference type="InterPro" id="IPR037550">
    <property type="entry name" value="Sec23_C"/>
</dbReference>
<dbReference type="InterPro" id="IPR036465">
    <property type="entry name" value="vWFA_dom_sf"/>
</dbReference>
<dbReference type="InterPro" id="IPR006895">
    <property type="entry name" value="Znf_Sec23_Sec24"/>
</dbReference>
<dbReference type="InterPro" id="IPR036174">
    <property type="entry name" value="Znf_Sec23_Sec24_sf"/>
</dbReference>
<dbReference type="PANTHER" id="PTHR11141">
    <property type="entry name" value="PROTEIN TRANSPORT PROTEIN SEC23"/>
    <property type="match status" value="1"/>
</dbReference>
<dbReference type="PANTHER" id="PTHR11141:SF0">
    <property type="entry name" value="PROTEIN TRANSPORT PROTEIN SEC23"/>
    <property type="match status" value="1"/>
</dbReference>
<dbReference type="Pfam" id="PF00626">
    <property type="entry name" value="Gelsolin"/>
    <property type="match status" value="1"/>
</dbReference>
<dbReference type="Pfam" id="PF08033">
    <property type="entry name" value="Sec23_BS"/>
    <property type="match status" value="1"/>
</dbReference>
<dbReference type="Pfam" id="PF04815">
    <property type="entry name" value="Sec23_helical"/>
    <property type="match status" value="1"/>
</dbReference>
<dbReference type="Pfam" id="PF04811">
    <property type="entry name" value="Sec23_trunk"/>
    <property type="match status" value="1"/>
</dbReference>
<dbReference type="Pfam" id="PF04810">
    <property type="entry name" value="zf-Sec23_Sec24"/>
    <property type="match status" value="1"/>
</dbReference>
<dbReference type="SUPFAM" id="SSF81995">
    <property type="entry name" value="beta-sandwich domain of Sec23/24"/>
    <property type="match status" value="1"/>
</dbReference>
<dbReference type="SUPFAM" id="SSF82754">
    <property type="entry name" value="C-terminal, gelsolin-like domain of Sec23/24"/>
    <property type="match status" value="1"/>
</dbReference>
<dbReference type="SUPFAM" id="SSF81811">
    <property type="entry name" value="Helical domain of Sec23/24"/>
    <property type="match status" value="1"/>
</dbReference>
<dbReference type="SUPFAM" id="SSF53300">
    <property type="entry name" value="vWA-like"/>
    <property type="match status" value="1"/>
</dbReference>
<dbReference type="SUPFAM" id="SSF82919">
    <property type="entry name" value="Zn-finger domain of Sec23/24"/>
    <property type="match status" value="1"/>
</dbReference>
<proteinExistence type="inferred from homology"/>
<protein>
    <recommendedName>
        <fullName>Protein transport protein SEC23</fullName>
    </recommendedName>
</protein>
<name>SEC23_CANAL</name>
<keyword id="KW-0963">Cytoplasm</keyword>
<keyword id="KW-0968">Cytoplasmic vesicle</keyword>
<keyword id="KW-0256">Endoplasmic reticulum</keyword>
<keyword id="KW-0931">ER-Golgi transport</keyword>
<keyword id="KW-0333">Golgi apparatus</keyword>
<keyword id="KW-0472">Membrane</keyword>
<keyword id="KW-0479">Metal-binding</keyword>
<keyword id="KW-0653">Protein transport</keyword>
<keyword id="KW-1185">Reference proteome</keyword>
<keyword id="KW-0813">Transport</keyword>
<keyword id="KW-0862">Zinc</keyword>
<sequence length="762" mass="85684">MDFEEAEDINGIRFAWNAFPSTKVEAGKVVVPTGALYTPLKQREDLPIAAYDPIYCSNQSCKSILNPYCAVDPNGFWRCPLCQYRNPLPAHYHGLNPENLPLELQSTSSTIEYITARPVQNPPIFTFVIDLCQDEDNLQALIEDIIVSFNYLPPNALIGLITFGTMIQVHDLGSDKINKSYIFRGDKEYTDKQISEMLNRPISTQLMQQQQQQPGQMNPQLANSLTRFFLPLEDVEFQLTSILENLSKDPWAVANGARPLRSTGSALNIAVNLLGLTYPGFGARVMLFAAGPCTLNPGMIVGNQLKEPIRSHSDIDKDNAKHFKKATKLYENIAAKAVKNCHTVDIFAGCYDQIGMLEMKNLCNLTGGTLLLTDAFTTSIFKRSFLRLFNKDDEGYLLMGFNGNLEVRTSKELKISGLIGNASSLQVKSANVSENELGLGGSSSYRLCSTSPRHTYAVFFDVVNNQQLPPNAQSYIQFITHYQHSSGTYRVRVTTVSNFLTSDEQTLTNSFDQEAAAVLMARITLFKAEQDDGADVLRWVDRMLIRLCQKFADYRKDQQESFRLGPQFQLYPQFIYYLRRSQFLQVFNNSPDETAFYRHVLLVEDTNNSLIMIQPTLTSFTLDGEPEAVLLDSVSIKDDRILLLDTFFHILIFHGKTISQWRKANYQDLPEYSNFKELLEFPKKEAAELLHDRYPLPRFIDTEEGGSQARFLYSKLNPSVTYNTNDFIGGGGAGGGAIVLTDDVSLQVFMSHLQKLVVSGSS</sequence>
<reference key="1">
    <citation type="journal article" date="2004" name="Proc. Natl. Acad. Sci. U.S.A.">
        <title>The diploid genome sequence of Candida albicans.</title>
        <authorList>
            <person name="Jones T."/>
            <person name="Federspiel N.A."/>
            <person name="Chibana H."/>
            <person name="Dungan J."/>
            <person name="Kalman S."/>
            <person name="Magee B.B."/>
            <person name="Newport G."/>
            <person name="Thorstenson Y.R."/>
            <person name="Agabian N."/>
            <person name="Magee P.T."/>
            <person name="Davis R.W."/>
            <person name="Scherer S."/>
        </authorList>
    </citation>
    <scope>NUCLEOTIDE SEQUENCE [LARGE SCALE GENOMIC DNA]</scope>
    <source>
        <strain>SC5314 / ATCC MYA-2876</strain>
    </source>
</reference>
<reference key="2">
    <citation type="journal article" date="2007" name="Genome Biol.">
        <title>Assembly of the Candida albicans genome into sixteen supercontigs aligned on the eight chromosomes.</title>
        <authorList>
            <person name="van het Hoog M."/>
            <person name="Rast T.J."/>
            <person name="Martchenko M."/>
            <person name="Grindle S."/>
            <person name="Dignard D."/>
            <person name="Hogues H."/>
            <person name="Cuomo C."/>
            <person name="Berriman M."/>
            <person name="Scherer S."/>
            <person name="Magee B.B."/>
            <person name="Whiteway M."/>
            <person name="Chibana H."/>
            <person name="Nantel A."/>
            <person name="Magee P.T."/>
        </authorList>
    </citation>
    <scope>GENOME REANNOTATION</scope>
    <source>
        <strain>SC5314 / ATCC MYA-2876</strain>
    </source>
</reference>
<reference key="3">
    <citation type="journal article" date="2013" name="Genome Biol.">
        <title>Assembly of a phased diploid Candida albicans genome facilitates allele-specific measurements and provides a simple model for repeat and indel structure.</title>
        <authorList>
            <person name="Muzzey D."/>
            <person name="Schwartz K."/>
            <person name="Weissman J.S."/>
            <person name="Sherlock G."/>
        </authorList>
    </citation>
    <scope>NUCLEOTIDE SEQUENCE [LARGE SCALE GENOMIC DNA]</scope>
    <scope>GENOME REANNOTATION</scope>
    <source>
        <strain>SC5314 / ATCC MYA-2876</strain>
    </source>
</reference>